<proteinExistence type="predicted"/>
<name>PEP5L_SCHPO</name>
<organism>
    <name type="scientific">Schizosaccharomyces pombe (strain 972 / ATCC 24843)</name>
    <name type="common">Fission yeast</name>
    <dbReference type="NCBI Taxonomy" id="284812"/>
    <lineage>
        <taxon>Eukaryota</taxon>
        <taxon>Fungi</taxon>
        <taxon>Dikarya</taxon>
        <taxon>Ascomycota</taxon>
        <taxon>Taphrinomycotina</taxon>
        <taxon>Schizosaccharomycetes</taxon>
        <taxon>Schizosaccharomycetales</taxon>
        <taxon>Schizosaccharomycetaceae</taxon>
        <taxon>Schizosaccharomyces</taxon>
    </lineage>
</organism>
<gene>
    <name type="ORF">SPAC16A10.03c</name>
</gene>
<evidence type="ECO:0000269" key="1">
    <source>
    </source>
</evidence>
<dbReference type="EMBL" id="CU329670">
    <property type="protein sequence ID" value="CAB09996.4"/>
    <property type="molecule type" value="Genomic_DNA"/>
</dbReference>
<dbReference type="PIR" id="T37768">
    <property type="entry name" value="T37768"/>
</dbReference>
<dbReference type="RefSeq" id="NP_594043.2">
    <property type="nucleotide sequence ID" value="NM_001019468.2"/>
</dbReference>
<dbReference type="SMR" id="P87295"/>
<dbReference type="BioGRID" id="278774">
    <property type="interactions" value="3"/>
</dbReference>
<dbReference type="FunCoup" id="P87295">
    <property type="interactions" value="5"/>
</dbReference>
<dbReference type="STRING" id="284812.P87295"/>
<dbReference type="iPTMnet" id="P87295"/>
<dbReference type="PaxDb" id="4896-SPAC16A10.03c.1"/>
<dbReference type="EnsemblFungi" id="SPAC16A10.03c.1">
    <property type="protein sequence ID" value="SPAC16A10.03c.1:pep"/>
    <property type="gene ID" value="SPAC16A10.03c"/>
</dbReference>
<dbReference type="KEGG" id="spo:2542307"/>
<dbReference type="PomBase" id="SPAC16A10.03c"/>
<dbReference type="VEuPathDB" id="FungiDB:SPAC16A10.03c"/>
<dbReference type="eggNOG" id="KOG2114">
    <property type="taxonomic scope" value="Eukaryota"/>
</dbReference>
<dbReference type="HOGENOM" id="CLU_333219_0_0_1"/>
<dbReference type="InParanoid" id="P87295"/>
<dbReference type="OMA" id="HRDCATE"/>
<dbReference type="PRO" id="PR:P87295"/>
<dbReference type="Proteomes" id="UP000002485">
    <property type="component" value="Chromosome I"/>
</dbReference>
<dbReference type="GO" id="GO:0005829">
    <property type="term" value="C:cytosol"/>
    <property type="evidence" value="ECO:0007005"/>
    <property type="project" value="PomBase"/>
</dbReference>
<dbReference type="GO" id="GO:0005768">
    <property type="term" value="C:endosome"/>
    <property type="evidence" value="ECO:0000318"/>
    <property type="project" value="GO_Central"/>
</dbReference>
<dbReference type="GO" id="GO:0030897">
    <property type="term" value="C:HOPS complex"/>
    <property type="evidence" value="ECO:0000318"/>
    <property type="project" value="GO_Central"/>
</dbReference>
<dbReference type="GO" id="GO:0005634">
    <property type="term" value="C:nucleus"/>
    <property type="evidence" value="ECO:0007005"/>
    <property type="project" value="PomBase"/>
</dbReference>
<dbReference type="GO" id="GO:0030674">
    <property type="term" value="F:protein-macromolecule adaptor activity"/>
    <property type="evidence" value="ECO:0000318"/>
    <property type="project" value="GO_Central"/>
</dbReference>
<dbReference type="GO" id="GO:0061630">
    <property type="term" value="F:ubiquitin protein ligase activity"/>
    <property type="evidence" value="ECO:0000255"/>
    <property type="project" value="PomBase"/>
</dbReference>
<dbReference type="GO" id="GO:0008270">
    <property type="term" value="F:zinc ion binding"/>
    <property type="evidence" value="ECO:0000255"/>
    <property type="project" value="PomBase"/>
</dbReference>
<dbReference type="GO" id="GO:0007032">
    <property type="term" value="P:endosome organization"/>
    <property type="evidence" value="ECO:0000318"/>
    <property type="project" value="GO_Central"/>
</dbReference>
<dbReference type="GO" id="GO:0006886">
    <property type="term" value="P:intracellular protein transport"/>
    <property type="evidence" value="ECO:0000303"/>
    <property type="project" value="PomBase"/>
</dbReference>
<dbReference type="GO" id="GO:0048284">
    <property type="term" value="P:organelle fusion"/>
    <property type="evidence" value="ECO:0000318"/>
    <property type="project" value="GO_Central"/>
</dbReference>
<dbReference type="GO" id="GO:0007033">
    <property type="term" value="P:vacuole organization"/>
    <property type="evidence" value="ECO:0000318"/>
    <property type="project" value="GO_Central"/>
</dbReference>
<dbReference type="GO" id="GO:0006904">
    <property type="term" value="P:vesicle docking involved in exocytosis"/>
    <property type="evidence" value="ECO:0000318"/>
    <property type="project" value="GO_Central"/>
</dbReference>
<dbReference type="InterPro" id="IPR000547">
    <property type="entry name" value="Clathrin_H-chain/VPS_repeat"/>
</dbReference>
<dbReference type="InterPro" id="IPR036322">
    <property type="entry name" value="WD40_repeat_dom_sf"/>
</dbReference>
<dbReference type="InterPro" id="IPR001841">
    <property type="entry name" value="Znf_RING"/>
</dbReference>
<dbReference type="PANTHER" id="PTHR23323:SF28">
    <property type="entry name" value="PEP5-LIKE ZINC FINGER PROTEIN C16A10.03C"/>
    <property type="match status" value="1"/>
</dbReference>
<dbReference type="PANTHER" id="PTHR23323">
    <property type="entry name" value="VACUOLAR PROTEIN SORTING-ASSOCIATED PROTEIN"/>
    <property type="match status" value="1"/>
</dbReference>
<dbReference type="Pfam" id="PF23341">
    <property type="entry name" value="PEP5_VPS11_N"/>
    <property type="match status" value="1"/>
</dbReference>
<dbReference type="Pfam" id="PF23356">
    <property type="entry name" value="TPR_PEP5_VPS11"/>
    <property type="match status" value="1"/>
</dbReference>
<dbReference type="Pfam" id="PF17122">
    <property type="entry name" value="zf-C3H2C3"/>
    <property type="match status" value="1"/>
</dbReference>
<dbReference type="SUPFAM" id="SSF50978">
    <property type="entry name" value="WD40 repeat-like"/>
    <property type="match status" value="1"/>
</dbReference>
<dbReference type="PROSITE" id="PS50236">
    <property type="entry name" value="CHCR"/>
    <property type="match status" value="1"/>
</dbReference>
<comment type="subcellular location">
    <subcellularLocation>
        <location evidence="1">Cytoplasm</location>
    </subcellularLocation>
    <subcellularLocation>
        <location evidence="1">Nucleus</location>
    </subcellularLocation>
</comment>
<feature type="chain" id="PRO_0000055994" description="Pep5-like zinc finger protein C16A10.03c">
    <location>
        <begin position="1"/>
        <end position="847"/>
    </location>
</feature>
<feature type="repeat" description="CHCR">
    <location>
        <begin position="387"/>
        <end position="526"/>
    </location>
</feature>
<feature type="zinc finger region" description="RING-type; atypical">
    <location>
        <begin position="780"/>
        <end position="814"/>
    </location>
</feature>
<sequence>MNINEWEKFSLFQWQECPSIKILHDSVGNKISCIGKSTKRIAIGTLDGRIVILNSRLQLIRDFYACEQGIVQQIYITADQSALCCVVLDKQNFVYLQFWSLNPSKKTNSNSPLCLYEHRLYGIPNPPFPATSLYVSIDIKTVVCGFANGLVIRVEGDFVRDLGSRQDIILREKDSITNLILYSPKKLFVSTTTQVMVYKIKNNTKKVISNHGIPLFCSIQYQGKYIMCAGGSFLSVYTTPDMQLQNTYCVDGTFELLFSSFGLVFVVYTRKNGENGLENNSSIREIKALDVEKRYVLYESLLEQSYDNIFFNSFDCIFFSSTKVPCQLIRLPSDFVLCKMKGKKEHKDAFKIANYLGSPEDTIRECALAAAGECRQQLNFQDATYYYIEAIPFSDSAEIIKFYLEKKLIKELTSYLEALSAKGFAFSHEISTLIYLYIKLRKLDKLTEYVSGCPTEISLPILRKYKCLDQMELLGTIRKLPNVCMEVYQEKGDVEKAFNHLQVCNLPELLRTSNSFGIWLFNSDPMRFMKEAIRNIEILNSQGKDKELSNILKIVYLGIFSQNVQIQLIFLDELLKSKKSENVLKFIYTRKLYALMQKELQHSNPQNELDALQIIHDSQGLLDYESSILCLQAVSWKQVTDLLYSHLSLKEGQDDSLIQQIISDPETVKTLSETYSSEDALHVLKFFVRERSITNKYEDILYKILEACFMQFRIPIQHVLNILVKDGTLNFCFLKPLLLKWMNDYETRIHQNDDEIQVIKNDIEKKRQLLGTIQDSEKVCDNCEGLLDVPFVSYSCLHLVHRDCATETVCPKCKAGYLDKKNSHDQKKTSTFSELFHDFESIDSVML</sequence>
<reference key="1">
    <citation type="journal article" date="2002" name="Nature">
        <title>The genome sequence of Schizosaccharomyces pombe.</title>
        <authorList>
            <person name="Wood V."/>
            <person name="Gwilliam R."/>
            <person name="Rajandream M.A."/>
            <person name="Lyne M.H."/>
            <person name="Lyne R."/>
            <person name="Stewart A."/>
            <person name="Sgouros J.G."/>
            <person name="Peat N."/>
            <person name="Hayles J."/>
            <person name="Baker S.G."/>
            <person name="Basham D."/>
            <person name="Bowman S."/>
            <person name="Brooks K."/>
            <person name="Brown D."/>
            <person name="Brown S."/>
            <person name="Chillingworth T."/>
            <person name="Churcher C.M."/>
            <person name="Collins M."/>
            <person name="Connor R."/>
            <person name="Cronin A."/>
            <person name="Davis P."/>
            <person name="Feltwell T."/>
            <person name="Fraser A."/>
            <person name="Gentles S."/>
            <person name="Goble A."/>
            <person name="Hamlin N."/>
            <person name="Harris D.E."/>
            <person name="Hidalgo J."/>
            <person name="Hodgson G."/>
            <person name="Holroyd S."/>
            <person name="Hornsby T."/>
            <person name="Howarth S."/>
            <person name="Huckle E.J."/>
            <person name="Hunt S."/>
            <person name="Jagels K."/>
            <person name="James K.D."/>
            <person name="Jones L."/>
            <person name="Jones M."/>
            <person name="Leather S."/>
            <person name="McDonald S."/>
            <person name="McLean J."/>
            <person name="Mooney P."/>
            <person name="Moule S."/>
            <person name="Mungall K.L."/>
            <person name="Murphy L.D."/>
            <person name="Niblett D."/>
            <person name="Odell C."/>
            <person name="Oliver K."/>
            <person name="O'Neil S."/>
            <person name="Pearson D."/>
            <person name="Quail M.A."/>
            <person name="Rabbinowitsch E."/>
            <person name="Rutherford K.M."/>
            <person name="Rutter S."/>
            <person name="Saunders D."/>
            <person name="Seeger K."/>
            <person name="Sharp S."/>
            <person name="Skelton J."/>
            <person name="Simmonds M.N."/>
            <person name="Squares R."/>
            <person name="Squares S."/>
            <person name="Stevens K."/>
            <person name="Taylor K."/>
            <person name="Taylor R.G."/>
            <person name="Tivey A."/>
            <person name="Walsh S.V."/>
            <person name="Warren T."/>
            <person name="Whitehead S."/>
            <person name="Woodward J.R."/>
            <person name="Volckaert G."/>
            <person name="Aert R."/>
            <person name="Robben J."/>
            <person name="Grymonprez B."/>
            <person name="Weltjens I."/>
            <person name="Vanstreels E."/>
            <person name="Rieger M."/>
            <person name="Schaefer M."/>
            <person name="Mueller-Auer S."/>
            <person name="Gabel C."/>
            <person name="Fuchs M."/>
            <person name="Duesterhoeft A."/>
            <person name="Fritzc C."/>
            <person name="Holzer E."/>
            <person name="Moestl D."/>
            <person name="Hilbert H."/>
            <person name="Borzym K."/>
            <person name="Langer I."/>
            <person name="Beck A."/>
            <person name="Lehrach H."/>
            <person name="Reinhardt R."/>
            <person name="Pohl T.M."/>
            <person name="Eger P."/>
            <person name="Zimmermann W."/>
            <person name="Wedler H."/>
            <person name="Wambutt R."/>
            <person name="Purnelle B."/>
            <person name="Goffeau A."/>
            <person name="Cadieu E."/>
            <person name="Dreano S."/>
            <person name="Gloux S."/>
            <person name="Lelaure V."/>
            <person name="Mottier S."/>
            <person name="Galibert F."/>
            <person name="Aves S.J."/>
            <person name="Xiang Z."/>
            <person name="Hunt C."/>
            <person name="Moore K."/>
            <person name="Hurst S.M."/>
            <person name="Lucas M."/>
            <person name="Rochet M."/>
            <person name="Gaillardin C."/>
            <person name="Tallada V.A."/>
            <person name="Garzon A."/>
            <person name="Thode G."/>
            <person name="Daga R.R."/>
            <person name="Cruzado L."/>
            <person name="Jimenez J."/>
            <person name="Sanchez M."/>
            <person name="del Rey F."/>
            <person name="Benito J."/>
            <person name="Dominguez A."/>
            <person name="Revuelta J.L."/>
            <person name="Moreno S."/>
            <person name="Armstrong J."/>
            <person name="Forsburg S.L."/>
            <person name="Cerutti L."/>
            <person name="Lowe T."/>
            <person name="McCombie W.R."/>
            <person name="Paulsen I."/>
            <person name="Potashkin J."/>
            <person name="Shpakovski G.V."/>
            <person name="Ussery D."/>
            <person name="Barrell B.G."/>
            <person name="Nurse P."/>
        </authorList>
    </citation>
    <scope>NUCLEOTIDE SEQUENCE [LARGE SCALE GENOMIC DNA]</scope>
    <source>
        <strain>972 / ATCC 24843</strain>
    </source>
</reference>
<reference key="2">
    <citation type="journal article" date="2011" name="Science">
        <title>Comparative functional genomics of the fission yeasts.</title>
        <authorList>
            <person name="Rhind N."/>
            <person name="Chen Z."/>
            <person name="Yassour M."/>
            <person name="Thompson D.A."/>
            <person name="Haas B.J."/>
            <person name="Habib N."/>
            <person name="Wapinski I."/>
            <person name="Roy S."/>
            <person name="Lin M.F."/>
            <person name="Heiman D.I."/>
            <person name="Young S.K."/>
            <person name="Furuya K."/>
            <person name="Guo Y."/>
            <person name="Pidoux A."/>
            <person name="Chen H.M."/>
            <person name="Robbertse B."/>
            <person name="Goldberg J.M."/>
            <person name="Aoki K."/>
            <person name="Bayne E.H."/>
            <person name="Berlin A.M."/>
            <person name="Desjardins C.A."/>
            <person name="Dobbs E."/>
            <person name="Dukaj L."/>
            <person name="Fan L."/>
            <person name="FitzGerald M.G."/>
            <person name="French C."/>
            <person name="Gujja S."/>
            <person name="Hansen K."/>
            <person name="Keifenheim D."/>
            <person name="Levin J.Z."/>
            <person name="Mosher R.A."/>
            <person name="Mueller C.A."/>
            <person name="Pfiffner J."/>
            <person name="Priest M."/>
            <person name="Russ C."/>
            <person name="Smialowska A."/>
            <person name="Swoboda P."/>
            <person name="Sykes S.M."/>
            <person name="Vaughn M."/>
            <person name="Vengrova S."/>
            <person name="Yoder R."/>
            <person name="Zeng Q."/>
            <person name="Allshire R."/>
            <person name="Baulcombe D."/>
            <person name="Birren B.W."/>
            <person name="Brown W."/>
            <person name="Ekwall K."/>
            <person name="Kellis M."/>
            <person name="Leatherwood J."/>
            <person name="Levin H."/>
            <person name="Margalit H."/>
            <person name="Martienssen R."/>
            <person name="Nieduszynski C.A."/>
            <person name="Spatafora J.W."/>
            <person name="Friedman N."/>
            <person name="Dalgaard J.Z."/>
            <person name="Baumann P."/>
            <person name="Niki H."/>
            <person name="Regev A."/>
            <person name="Nusbaum C."/>
        </authorList>
    </citation>
    <scope>REVISION OF GENE MODEL</scope>
</reference>
<reference key="3">
    <citation type="journal article" date="2006" name="Nat. Biotechnol.">
        <title>ORFeome cloning and global analysis of protein localization in the fission yeast Schizosaccharomyces pombe.</title>
        <authorList>
            <person name="Matsuyama A."/>
            <person name="Arai R."/>
            <person name="Yashiroda Y."/>
            <person name="Shirai A."/>
            <person name="Kamata A."/>
            <person name="Sekido S."/>
            <person name="Kobayashi Y."/>
            <person name="Hashimoto A."/>
            <person name="Hamamoto M."/>
            <person name="Hiraoka Y."/>
            <person name="Horinouchi S."/>
            <person name="Yoshida M."/>
        </authorList>
    </citation>
    <scope>SUBCELLULAR LOCATION [LARGE SCALE ANALYSIS]</scope>
</reference>
<protein>
    <recommendedName>
        <fullName>Pep5-like zinc finger protein C16A10.03c</fullName>
    </recommendedName>
</protein>
<accession>P87295</accession>
<keyword id="KW-0963">Cytoplasm</keyword>
<keyword id="KW-0479">Metal-binding</keyword>
<keyword id="KW-0539">Nucleus</keyword>
<keyword id="KW-1185">Reference proteome</keyword>
<keyword id="KW-0862">Zinc</keyword>
<keyword id="KW-0863">Zinc-finger</keyword>